<name>VA5_MICHY</name>
<proteinExistence type="evidence at transcript level"/>
<dbReference type="EMBL" id="EU249354">
    <property type="protein sequence ID" value="ABY19390.1"/>
    <property type="molecule type" value="mRNA"/>
</dbReference>
<dbReference type="SMR" id="A9YME1"/>
<dbReference type="OrthoDB" id="43654at2759"/>
<dbReference type="GO" id="GO:0005576">
    <property type="term" value="C:extracellular region"/>
    <property type="evidence" value="ECO:0007669"/>
    <property type="project" value="UniProtKB-SubCell"/>
</dbReference>
<dbReference type="CDD" id="cd05380">
    <property type="entry name" value="CAP_euk"/>
    <property type="match status" value="1"/>
</dbReference>
<dbReference type="Gene3D" id="3.40.33.10">
    <property type="entry name" value="CAP"/>
    <property type="match status" value="1"/>
</dbReference>
<dbReference type="InterPro" id="IPR018244">
    <property type="entry name" value="Allrgn_V5/Tpx1_CS"/>
</dbReference>
<dbReference type="InterPro" id="IPR014044">
    <property type="entry name" value="CAP_dom"/>
</dbReference>
<dbReference type="InterPro" id="IPR035940">
    <property type="entry name" value="CAP_sf"/>
</dbReference>
<dbReference type="InterPro" id="IPR001283">
    <property type="entry name" value="CRISP-related"/>
</dbReference>
<dbReference type="InterPro" id="IPR002413">
    <property type="entry name" value="V5_allergen-like"/>
</dbReference>
<dbReference type="PANTHER" id="PTHR10334">
    <property type="entry name" value="CYSTEINE-RICH SECRETORY PROTEIN-RELATED"/>
    <property type="match status" value="1"/>
</dbReference>
<dbReference type="Pfam" id="PF00188">
    <property type="entry name" value="CAP"/>
    <property type="match status" value="1"/>
</dbReference>
<dbReference type="PRINTS" id="PR00838">
    <property type="entry name" value="V5ALLERGEN"/>
</dbReference>
<dbReference type="PRINTS" id="PR00837">
    <property type="entry name" value="V5TPXLIKE"/>
</dbReference>
<dbReference type="SMART" id="SM00198">
    <property type="entry name" value="SCP"/>
    <property type="match status" value="1"/>
</dbReference>
<dbReference type="SUPFAM" id="SSF55797">
    <property type="entry name" value="PR-1-like"/>
    <property type="match status" value="1"/>
</dbReference>
<dbReference type="PROSITE" id="PS01009">
    <property type="entry name" value="CRISP_1"/>
    <property type="match status" value="1"/>
</dbReference>
<dbReference type="PROSITE" id="PS01010">
    <property type="entry name" value="CRISP_2"/>
    <property type="match status" value="1"/>
</dbReference>
<accession>A9YME1</accession>
<keyword id="KW-0020">Allergen</keyword>
<keyword id="KW-1015">Disulfide bond</keyword>
<keyword id="KW-0964">Secreted</keyword>
<keyword id="KW-0732">Signal</keyword>
<evidence type="ECO:0000250" key="1"/>
<evidence type="ECO:0000255" key="2"/>
<evidence type="ECO:0000305" key="3"/>
<feature type="signal peptide" evidence="2">
    <location>
        <begin position="1"/>
        <end position="23"/>
    </location>
</feature>
<feature type="chain" id="PRO_0000401928" description="Venom allergen 5">
    <location>
        <begin position="24"/>
        <end position="232"/>
    </location>
</feature>
<feature type="domain" description="SCP">
    <location>
        <begin position="71"/>
        <end position="217"/>
    </location>
</feature>
<feature type="disulfide bond" evidence="1">
    <location>
        <begin position="28"/>
        <end position="43"/>
    </location>
</feature>
<feature type="disulfide bond" evidence="1">
    <location>
        <begin position="54"/>
        <end position="119"/>
    </location>
</feature>
<feature type="disulfide bond" evidence="1">
    <location>
        <begin position="198"/>
        <end position="215"/>
    </location>
</feature>
<comment type="subcellular location">
    <subcellularLocation>
        <location evidence="1">Secreted</location>
    </subcellularLocation>
</comment>
<comment type="tissue specificity">
    <text>Expressed by the venom gland.</text>
</comment>
<comment type="allergen">
    <text evidence="1">Causes an allergic reaction in human.</text>
</comment>
<comment type="similarity">
    <text evidence="3">Belongs to the CRISP family. Venom allergen 5-like subfamily.</text>
</comment>
<sequence>MEQIKYLLIGIIFSSAISSSLQCAYENCADWANPGQSQKHTMCLYPTTALGNKCNEGRIIQLTEADKQYILQLHNELRAKVASGGESQGSNGPQPAGKIGPLKWDNEIAEIAQRWVNQCTFEHDKCRNTKANSVGQNLYMMGSSEKSENTHDILTASVNSWYSEVKDFDNRSVREYKFEFTTGHYSQVVWGDTTHVGCGLVQYKDSGFYTTMVACNYSPAGNLIGGTVYPTL</sequence>
<protein>
    <recommendedName>
        <fullName>Venom allergen 5</fullName>
    </recommendedName>
    <alternativeName>
        <fullName>Antigen 5</fullName>
    </alternativeName>
    <alternativeName>
        <fullName>Cysteine-rich venom protein</fullName>
        <shortName>CRVP</shortName>
    </alternativeName>
    <alternativeName>
        <fullName>Venom protein 3</fullName>
    </alternativeName>
</protein>
<organism>
    <name type="scientific">Microctonus hyperodae</name>
    <name type="common">Parasitoid wasp</name>
    <dbReference type="NCBI Taxonomy" id="165561"/>
    <lineage>
        <taxon>Eukaryota</taxon>
        <taxon>Metazoa</taxon>
        <taxon>Ecdysozoa</taxon>
        <taxon>Arthropoda</taxon>
        <taxon>Hexapoda</taxon>
        <taxon>Insecta</taxon>
        <taxon>Pterygota</taxon>
        <taxon>Neoptera</taxon>
        <taxon>Endopterygota</taxon>
        <taxon>Hymenoptera</taxon>
        <taxon>Apocrita</taxon>
        <taxon>Ichneumonoidea</taxon>
        <taxon>Braconidae</taxon>
        <taxon>Euphorinae</taxon>
        <taxon>Microctonus</taxon>
    </lineage>
</organism>
<reference key="1">
    <citation type="journal article" date="2008" name="Insect Mol. Biol.">
        <title>The constituents of Microctonus sp. parasitoid venoms.</title>
        <authorList>
            <person name="Crawford A.M."/>
            <person name="Brauning R."/>
            <person name="Smolenski G."/>
            <person name="Ferguson C."/>
            <person name="Barton D."/>
            <person name="Wheeler T.T."/>
            <person name="McCulloch A."/>
        </authorList>
    </citation>
    <scope>NUCLEOTIDE SEQUENCE [MRNA]</scope>
    <source>
        <tissue>Venom gland</tissue>
    </source>
</reference>